<gene>
    <name evidence="1" type="primary">pcm</name>
    <name type="ordered locus">FP1909</name>
</gene>
<name>PIMT_FLAPJ</name>
<organism>
    <name type="scientific">Flavobacterium psychrophilum (strain ATCC 49511 / DSM 21280 / CIP 103535 / JIP02/86)</name>
    <dbReference type="NCBI Taxonomy" id="402612"/>
    <lineage>
        <taxon>Bacteria</taxon>
        <taxon>Pseudomonadati</taxon>
        <taxon>Bacteroidota</taxon>
        <taxon>Flavobacteriia</taxon>
        <taxon>Flavobacteriales</taxon>
        <taxon>Flavobacteriaceae</taxon>
        <taxon>Flavobacterium</taxon>
    </lineage>
</organism>
<accession>A6H0V1</accession>
<comment type="function">
    <text evidence="1">Catalyzes the methyl esterification of L-isoaspartyl residues in peptides and proteins that result from spontaneous decomposition of normal L-aspartyl and L-asparaginyl residues. It plays a role in the repair and/or degradation of damaged proteins.</text>
</comment>
<comment type="catalytic activity">
    <reaction evidence="1">
        <text>[protein]-L-isoaspartate + S-adenosyl-L-methionine = [protein]-L-isoaspartate alpha-methyl ester + S-adenosyl-L-homocysteine</text>
        <dbReference type="Rhea" id="RHEA:12705"/>
        <dbReference type="Rhea" id="RHEA-COMP:12143"/>
        <dbReference type="Rhea" id="RHEA-COMP:12144"/>
        <dbReference type="ChEBI" id="CHEBI:57856"/>
        <dbReference type="ChEBI" id="CHEBI:59789"/>
        <dbReference type="ChEBI" id="CHEBI:90596"/>
        <dbReference type="ChEBI" id="CHEBI:90598"/>
        <dbReference type="EC" id="2.1.1.77"/>
    </reaction>
</comment>
<comment type="subcellular location">
    <subcellularLocation>
        <location evidence="1">Cytoplasm</location>
    </subcellularLocation>
</comment>
<comment type="similarity">
    <text evidence="1">Belongs to the methyltransferase superfamily. L-isoaspartyl/D-aspartyl protein methyltransferase family.</text>
</comment>
<dbReference type="EC" id="2.1.1.77" evidence="1"/>
<dbReference type="EMBL" id="AM398681">
    <property type="protein sequence ID" value="CAL43975.1"/>
    <property type="molecule type" value="Genomic_DNA"/>
</dbReference>
<dbReference type="RefSeq" id="WP_011964013.1">
    <property type="nucleotide sequence ID" value="NC_009613.3"/>
</dbReference>
<dbReference type="RefSeq" id="YP_001296777.1">
    <property type="nucleotide sequence ID" value="NC_009613.3"/>
</dbReference>
<dbReference type="SMR" id="A6H0V1"/>
<dbReference type="STRING" id="402612.FP1909"/>
<dbReference type="EnsemblBacteria" id="CAL43975">
    <property type="protein sequence ID" value="CAL43975"/>
    <property type="gene ID" value="FP1909"/>
</dbReference>
<dbReference type="KEGG" id="fps:FP1909"/>
<dbReference type="PATRIC" id="fig|402612.5.peg.1935"/>
<dbReference type="eggNOG" id="COG2518">
    <property type="taxonomic scope" value="Bacteria"/>
</dbReference>
<dbReference type="HOGENOM" id="CLU_055432_2_0_10"/>
<dbReference type="OrthoDB" id="9810066at2"/>
<dbReference type="Proteomes" id="UP000006394">
    <property type="component" value="Chromosome"/>
</dbReference>
<dbReference type="GO" id="GO:0005737">
    <property type="term" value="C:cytoplasm"/>
    <property type="evidence" value="ECO:0007669"/>
    <property type="project" value="UniProtKB-SubCell"/>
</dbReference>
<dbReference type="GO" id="GO:0004719">
    <property type="term" value="F:protein-L-isoaspartate (D-aspartate) O-methyltransferase activity"/>
    <property type="evidence" value="ECO:0007669"/>
    <property type="project" value="UniProtKB-UniRule"/>
</dbReference>
<dbReference type="GO" id="GO:0032259">
    <property type="term" value="P:methylation"/>
    <property type="evidence" value="ECO:0007669"/>
    <property type="project" value="UniProtKB-KW"/>
</dbReference>
<dbReference type="GO" id="GO:0036211">
    <property type="term" value="P:protein modification process"/>
    <property type="evidence" value="ECO:0007669"/>
    <property type="project" value="UniProtKB-UniRule"/>
</dbReference>
<dbReference type="GO" id="GO:0030091">
    <property type="term" value="P:protein repair"/>
    <property type="evidence" value="ECO:0007669"/>
    <property type="project" value="UniProtKB-UniRule"/>
</dbReference>
<dbReference type="CDD" id="cd02440">
    <property type="entry name" value="AdoMet_MTases"/>
    <property type="match status" value="1"/>
</dbReference>
<dbReference type="FunFam" id="3.40.50.150:FF:000010">
    <property type="entry name" value="Protein-L-isoaspartate O-methyltransferase"/>
    <property type="match status" value="1"/>
</dbReference>
<dbReference type="Gene3D" id="3.40.50.150">
    <property type="entry name" value="Vaccinia Virus protein VP39"/>
    <property type="match status" value="1"/>
</dbReference>
<dbReference type="HAMAP" id="MF_00090">
    <property type="entry name" value="PIMT"/>
    <property type="match status" value="1"/>
</dbReference>
<dbReference type="InterPro" id="IPR000682">
    <property type="entry name" value="PCMT"/>
</dbReference>
<dbReference type="InterPro" id="IPR029063">
    <property type="entry name" value="SAM-dependent_MTases_sf"/>
</dbReference>
<dbReference type="NCBIfam" id="TIGR00080">
    <property type="entry name" value="pimt"/>
    <property type="match status" value="1"/>
</dbReference>
<dbReference type="NCBIfam" id="NF001453">
    <property type="entry name" value="PRK00312.1"/>
    <property type="match status" value="1"/>
</dbReference>
<dbReference type="PANTHER" id="PTHR11579">
    <property type="entry name" value="PROTEIN-L-ISOASPARTATE O-METHYLTRANSFERASE"/>
    <property type="match status" value="1"/>
</dbReference>
<dbReference type="PANTHER" id="PTHR11579:SF0">
    <property type="entry name" value="PROTEIN-L-ISOASPARTATE(D-ASPARTATE) O-METHYLTRANSFERASE"/>
    <property type="match status" value="1"/>
</dbReference>
<dbReference type="Pfam" id="PF01135">
    <property type="entry name" value="PCMT"/>
    <property type="match status" value="1"/>
</dbReference>
<dbReference type="SUPFAM" id="SSF53335">
    <property type="entry name" value="S-adenosyl-L-methionine-dependent methyltransferases"/>
    <property type="match status" value="1"/>
</dbReference>
<dbReference type="PROSITE" id="PS01279">
    <property type="entry name" value="PCMT"/>
    <property type="match status" value="1"/>
</dbReference>
<sequence length="213" mass="23610">MKDTPKHQGLRNQLVTVLQQKGITNKNILEAISKIPRHLFLNSSFEDYAYQDLAFPIGAGQTISQPYTVAFQTELLEVKKGDKVLEIGTGSGYQTAVLCMVGAVVYSVERQNELFKKTSLLLPKLGIRAKHLSFGDGYKGLPNYAPFDSIIVTAGAPEIPKALMAQLKIGGKLVIPVGENSQIMTLIIRKDETQFEKHEFGDFKFVPLLEDKN</sequence>
<evidence type="ECO:0000255" key="1">
    <source>
        <dbReference type="HAMAP-Rule" id="MF_00090"/>
    </source>
</evidence>
<feature type="chain" id="PRO_0000351859" description="Protein-L-isoaspartate O-methyltransferase">
    <location>
        <begin position="1"/>
        <end position="213"/>
    </location>
</feature>
<feature type="active site" evidence="1">
    <location>
        <position position="64"/>
    </location>
</feature>
<protein>
    <recommendedName>
        <fullName evidence="1">Protein-L-isoaspartate O-methyltransferase</fullName>
        <ecNumber evidence="1">2.1.1.77</ecNumber>
    </recommendedName>
    <alternativeName>
        <fullName evidence="1">L-isoaspartyl protein carboxyl methyltransferase</fullName>
    </alternativeName>
    <alternativeName>
        <fullName evidence="1">Protein L-isoaspartyl methyltransferase</fullName>
    </alternativeName>
    <alternativeName>
        <fullName evidence="1">Protein-beta-aspartate methyltransferase</fullName>
        <shortName evidence="1">PIMT</shortName>
    </alternativeName>
</protein>
<reference key="1">
    <citation type="journal article" date="2007" name="Nat. Biotechnol.">
        <title>Complete genome sequence of the fish pathogen Flavobacterium psychrophilum.</title>
        <authorList>
            <person name="Duchaud E."/>
            <person name="Boussaha M."/>
            <person name="Loux V."/>
            <person name="Bernardet J.-F."/>
            <person name="Michel C."/>
            <person name="Kerouault B."/>
            <person name="Mondot S."/>
            <person name="Nicolas P."/>
            <person name="Bossy R."/>
            <person name="Caron C."/>
            <person name="Bessieres P."/>
            <person name="Gibrat J.-F."/>
            <person name="Claverol S."/>
            <person name="Dumetz F."/>
            <person name="Le Henaff M."/>
            <person name="Benmansour A."/>
        </authorList>
    </citation>
    <scope>NUCLEOTIDE SEQUENCE [LARGE SCALE GENOMIC DNA]</scope>
    <source>
        <strain>ATCC 49511 / DSM 21280 / CIP 103535 / JIP02/86</strain>
    </source>
</reference>
<proteinExistence type="inferred from homology"/>
<keyword id="KW-0963">Cytoplasm</keyword>
<keyword id="KW-0489">Methyltransferase</keyword>
<keyword id="KW-1185">Reference proteome</keyword>
<keyword id="KW-0949">S-adenosyl-L-methionine</keyword>
<keyword id="KW-0808">Transferase</keyword>